<feature type="chain" id="PRO_0000260726" description="6-phospho-beta-galactosidase">
    <location>
        <begin position="1"/>
        <end position="470"/>
    </location>
</feature>
<feature type="active site" description="Proton donor" evidence="1">
    <location>
        <position position="160"/>
    </location>
</feature>
<feature type="active site" description="Nucleophile" evidence="1">
    <location>
        <position position="375"/>
    </location>
</feature>
<feature type="binding site" evidence="1">
    <location>
        <position position="19"/>
    </location>
    <ligand>
        <name>D-galactose 6-phosphate</name>
        <dbReference type="ChEBI" id="CHEBI:91004"/>
    </ligand>
</feature>
<feature type="binding site" evidence="1">
    <location>
        <position position="116"/>
    </location>
    <ligand>
        <name>D-galactose 6-phosphate</name>
        <dbReference type="ChEBI" id="CHEBI:91004"/>
    </ligand>
</feature>
<feature type="binding site" evidence="1">
    <location>
        <position position="159"/>
    </location>
    <ligand>
        <name>D-galactose 6-phosphate</name>
        <dbReference type="ChEBI" id="CHEBI:91004"/>
    </ligand>
</feature>
<feature type="binding site" evidence="1">
    <location>
        <position position="160"/>
    </location>
    <ligand>
        <name>D-galactose 6-phosphate</name>
        <dbReference type="ChEBI" id="CHEBI:91004"/>
    </ligand>
</feature>
<feature type="binding site" evidence="1">
    <location>
        <position position="297"/>
    </location>
    <ligand>
        <name>D-galactose 6-phosphate</name>
        <dbReference type="ChEBI" id="CHEBI:91004"/>
    </ligand>
</feature>
<feature type="binding site" evidence="1">
    <location>
        <position position="430"/>
    </location>
    <ligand>
        <name>D-galactose 6-phosphate</name>
        <dbReference type="ChEBI" id="CHEBI:91004"/>
    </ligand>
</feature>
<feature type="binding site" evidence="1">
    <location>
        <position position="431"/>
    </location>
    <ligand>
        <name>D-galactose 6-phosphate</name>
        <dbReference type="ChEBI" id="CHEBI:91004"/>
    </ligand>
</feature>
<feature type="binding site" evidence="1">
    <location>
        <position position="437"/>
    </location>
    <ligand>
        <name>D-galactose 6-phosphate</name>
        <dbReference type="ChEBI" id="CHEBI:91004"/>
    </ligand>
</feature>
<feature type="binding site" evidence="1">
    <location>
        <position position="439"/>
    </location>
    <ligand>
        <name>D-galactose 6-phosphate</name>
        <dbReference type="ChEBI" id="CHEBI:91004"/>
    </ligand>
</feature>
<protein>
    <recommendedName>
        <fullName evidence="1">6-phospho-beta-galactosidase</fullName>
        <ecNumber evidence="1">3.2.1.85</ecNumber>
    </recommendedName>
    <alternativeName>
        <fullName evidence="1">Beta-D-phosphogalactoside galactohydrolase</fullName>
        <shortName evidence="1">PGALase</shortName>
    </alternativeName>
    <alternativeName>
        <fullName evidence="1">P-beta-Gal</fullName>
        <shortName evidence="1">PBG</shortName>
    </alternativeName>
</protein>
<keyword id="KW-0326">Glycosidase</keyword>
<keyword id="KW-0378">Hydrolase</keyword>
<name>LACG_STAA3</name>
<dbReference type="EC" id="3.2.1.85" evidence="1"/>
<dbReference type="EMBL" id="CP000255">
    <property type="protein sequence ID" value="ABD21770.1"/>
    <property type="molecule type" value="Genomic_DNA"/>
</dbReference>
<dbReference type="RefSeq" id="WP_000169220.1">
    <property type="nucleotide sequence ID" value="NZ_CP027476.1"/>
</dbReference>
<dbReference type="SMR" id="Q2FEU3"/>
<dbReference type="KEGG" id="saa:SAUSA300_2149"/>
<dbReference type="HOGENOM" id="CLU_001859_1_3_9"/>
<dbReference type="OMA" id="YQIEGHG"/>
<dbReference type="UniPathway" id="UPA00542">
    <property type="reaction ID" value="UER00605"/>
</dbReference>
<dbReference type="Proteomes" id="UP000001939">
    <property type="component" value="Chromosome"/>
</dbReference>
<dbReference type="GO" id="GO:0005829">
    <property type="term" value="C:cytosol"/>
    <property type="evidence" value="ECO:0007669"/>
    <property type="project" value="TreeGrafter"/>
</dbReference>
<dbReference type="GO" id="GO:0033920">
    <property type="term" value="F:6-phospho-beta-galactosidase activity"/>
    <property type="evidence" value="ECO:0007669"/>
    <property type="project" value="UniProtKB-UniRule"/>
</dbReference>
<dbReference type="GO" id="GO:0008422">
    <property type="term" value="F:beta-glucosidase activity"/>
    <property type="evidence" value="ECO:0007669"/>
    <property type="project" value="TreeGrafter"/>
</dbReference>
<dbReference type="GO" id="GO:0019512">
    <property type="term" value="P:lactose catabolic process via tagatose-6-phosphate"/>
    <property type="evidence" value="ECO:0007669"/>
    <property type="project" value="InterPro"/>
</dbReference>
<dbReference type="FunFam" id="3.20.20.80:FF:000004">
    <property type="entry name" value="Beta-glucosidase 6-phospho-beta-glucosidase"/>
    <property type="match status" value="1"/>
</dbReference>
<dbReference type="Gene3D" id="3.20.20.80">
    <property type="entry name" value="Glycosidases"/>
    <property type="match status" value="1"/>
</dbReference>
<dbReference type="HAMAP" id="MF_01574">
    <property type="entry name" value="LacG"/>
    <property type="match status" value="1"/>
</dbReference>
<dbReference type="InterPro" id="IPR005928">
    <property type="entry name" value="6P-beta-galactosidase"/>
</dbReference>
<dbReference type="InterPro" id="IPR001360">
    <property type="entry name" value="Glyco_hydro_1"/>
</dbReference>
<dbReference type="InterPro" id="IPR018120">
    <property type="entry name" value="Glyco_hydro_1_AS"/>
</dbReference>
<dbReference type="InterPro" id="IPR033132">
    <property type="entry name" value="Glyco_hydro_1_N_CS"/>
</dbReference>
<dbReference type="InterPro" id="IPR017853">
    <property type="entry name" value="Glycoside_hydrolase_SF"/>
</dbReference>
<dbReference type="NCBIfam" id="TIGR01233">
    <property type="entry name" value="lacG"/>
    <property type="match status" value="1"/>
</dbReference>
<dbReference type="NCBIfam" id="NF010036">
    <property type="entry name" value="PRK13511.1"/>
    <property type="match status" value="1"/>
</dbReference>
<dbReference type="PANTHER" id="PTHR10353">
    <property type="entry name" value="GLYCOSYL HYDROLASE"/>
    <property type="match status" value="1"/>
</dbReference>
<dbReference type="PANTHER" id="PTHR10353:SF36">
    <property type="entry name" value="LP05116P"/>
    <property type="match status" value="1"/>
</dbReference>
<dbReference type="Pfam" id="PF00232">
    <property type="entry name" value="Glyco_hydro_1"/>
    <property type="match status" value="1"/>
</dbReference>
<dbReference type="PRINTS" id="PR00131">
    <property type="entry name" value="GLHYDRLASE1"/>
</dbReference>
<dbReference type="SUPFAM" id="SSF51445">
    <property type="entry name" value="(Trans)glycosidases"/>
    <property type="match status" value="1"/>
</dbReference>
<dbReference type="PROSITE" id="PS00572">
    <property type="entry name" value="GLYCOSYL_HYDROL_F1_1"/>
    <property type="match status" value="1"/>
</dbReference>
<dbReference type="PROSITE" id="PS00653">
    <property type="entry name" value="GLYCOSYL_HYDROL_F1_2"/>
    <property type="match status" value="1"/>
</dbReference>
<proteinExistence type="inferred from homology"/>
<comment type="catalytic activity">
    <reaction evidence="1">
        <text>a 6-phospho-beta-D-galactoside + H2O = D-galactose 6-phosphate + an alcohol</text>
        <dbReference type="Rhea" id="RHEA:24568"/>
        <dbReference type="ChEBI" id="CHEBI:15377"/>
        <dbReference type="ChEBI" id="CHEBI:30879"/>
        <dbReference type="ChEBI" id="CHEBI:58534"/>
        <dbReference type="ChEBI" id="CHEBI:91004"/>
        <dbReference type="EC" id="3.2.1.85"/>
    </reaction>
</comment>
<comment type="pathway">
    <text evidence="1">Carbohydrate metabolism; lactose degradation; D-galactose 6-phosphate and beta-D-glucose from lactose 6-phosphate: step 1/1.</text>
</comment>
<comment type="similarity">
    <text evidence="1">Belongs to the glycosyl hydrolase 1 family.</text>
</comment>
<organism>
    <name type="scientific">Staphylococcus aureus (strain USA300)</name>
    <dbReference type="NCBI Taxonomy" id="367830"/>
    <lineage>
        <taxon>Bacteria</taxon>
        <taxon>Bacillati</taxon>
        <taxon>Bacillota</taxon>
        <taxon>Bacilli</taxon>
        <taxon>Bacillales</taxon>
        <taxon>Staphylococcaceae</taxon>
        <taxon>Staphylococcus</taxon>
    </lineage>
</organism>
<evidence type="ECO:0000255" key="1">
    <source>
        <dbReference type="HAMAP-Rule" id="MF_01574"/>
    </source>
</evidence>
<reference key="1">
    <citation type="journal article" date="2006" name="Lancet">
        <title>Complete genome sequence of USA300, an epidemic clone of community-acquired meticillin-resistant Staphylococcus aureus.</title>
        <authorList>
            <person name="Diep B.A."/>
            <person name="Gill S.R."/>
            <person name="Chang R.F."/>
            <person name="Phan T.H."/>
            <person name="Chen J.H."/>
            <person name="Davidson M.G."/>
            <person name="Lin F."/>
            <person name="Lin J."/>
            <person name="Carleton H.A."/>
            <person name="Mongodin E.F."/>
            <person name="Sensabaugh G.F."/>
            <person name="Perdreau-Remington F."/>
        </authorList>
    </citation>
    <scope>NUCLEOTIDE SEQUENCE [LARGE SCALE GENOMIC DNA]</scope>
    <source>
        <strain>USA300</strain>
    </source>
</reference>
<gene>
    <name evidence="1" type="primary">lacG</name>
    <name type="ordered locus">SAUSA300_2149</name>
</gene>
<sequence>MTKTLPEDFIFGGATAAYQAEGATNTDGKGRVAWDTYLEENYWYTAEPASDFYNRYPVDLELSEKFGVNGIRISIAWSRIFPNGYGEVNPKGVEYYHKLFAECHKRHVEPFVTLHHFDTPEVLHKDGDFLNRKTIDYFVDYAEYCFKEFPEVKYWTTFNEIGPIGDGQYLVGKFPPGIKYDFEKVFQSHHNMMVAHARAVKLFKDGGYKGEIGVVHALPTKYPFDPSNPEDVRAAELEDIIHNKFILDATYLGKYSRETMEGVQHILSVNGGKLNITDEDYAILDAAKDLNDFLGINYYMSDWMRGYDGESEITHNATGDKGGSKYQLKGVGQREFDVDVPRTDWDWMIYPQGLYDQIMRVVKDYPNYHKIYITENGLGYKDEFIESEKTVHDDARIDYVRQHLNVIADAIIDGANVKGYFIWSLMDVFSWSNGYEKRYGLFYVDFETQERYPKKSAYWYKELAETKEIK</sequence>
<accession>Q2FEU3</accession>